<protein>
    <recommendedName>
        <fullName evidence="1">Methylthioribulose-1-phosphate dehydratase</fullName>
        <shortName evidence="1">MTRu-1-P dehydratase</shortName>
        <ecNumber evidence="1">4.2.1.109</ecNumber>
    </recommendedName>
</protein>
<sequence length="205" mass="22053">MISTDPWAGAVQDIIAAGRRMDRFGWVPATAGNISRRLPDGRIAITRSGGHKGHLTADGVIEVTADGRAVRAGDRPSAETLLHCHVYEASPDVGAVLHGHSVASTVLSMMEQGDAILLSGYEVLKVFEGQQTHDTTVRLPVFDNDQDIARLSGVVAPYLGRMPAGYVIRGHGVYVWGGTMDVALARLEGLEFLLACELERRKVAR</sequence>
<comment type="function">
    <text evidence="1">Catalyzes the dehydration of methylthioribulose-1-phosphate (MTRu-1-P) into 2,3-diketo-5-methylthiopentyl-1-phosphate (DK-MTP-1-P).</text>
</comment>
<comment type="catalytic activity">
    <reaction evidence="1">
        <text>5-(methylsulfanyl)-D-ribulose 1-phosphate = 5-methylsulfanyl-2,3-dioxopentyl phosphate + H2O</text>
        <dbReference type="Rhea" id="RHEA:15549"/>
        <dbReference type="ChEBI" id="CHEBI:15377"/>
        <dbReference type="ChEBI" id="CHEBI:58548"/>
        <dbReference type="ChEBI" id="CHEBI:58828"/>
        <dbReference type="EC" id="4.2.1.109"/>
    </reaction>
</comment>
<comment type="cofactor">
    <cofactor evidence="1">
        <name>Zn(2+)</name>
        <dbReference type="ChEBI" id="CHEBI:29105"/>
    </cofactor>
    <text evidence="1">Binds 1 zinc ion per subunit.</text>
</comment>
<comment type="pathway">
    <text evidence="1">Amino-acid biosynthesis; L-methionine biosynthesis via salvage pathway; L-methionine from S-methyl-5-thio-alpha-D-ribose 1-phosphate: step 2/6.</text>
</comment>
<comment type="similarity">
    <text evidence="1">Belongs to the aldolase class II family. MtnB subfamily.</text>
</comment>
<comment type="sequence caution" evidence="2">
    <conflict type="erroneous initiation">
        <sequence resource="EMBL-CDS" id="ACI51195"/>
    </conflict>
</comment>
<comment type="sequence caution" evidence="2">
    <conflict type="erroneous initiation">
        <sequence resource="EMBL-CDS" id="CAP54528"/>
    </conflict>
</comment>
<name>MTNB_GLUDA</name>
<feature type="chain" id="PRO_0000357081" description="Methylthioribulose-1-phosphate dehydratase">
    <location>
        <begin position="1"/>
        <end position="205"/>
    </location>
</feature>
<feature type="binding site" evidence="1">
    <location>
        <position position="98"/>
    </location>
    <ligand>
        <name>Zn(2+)</name>
        <dbReference type="ChEBI" id="CHEBI:29105"/>
    </ligand>
</feature>
<feature type="binding site" evidence="1">
    <location>
        <position position="100"/>
    </location>
    <ligand>
        <name>Zn(2+)</name>
        <dbReference type="ChEBI" id="CHEBI:29105"/>
    </ligand>
</feature>
<feature type="sequence conflict" description="In Ref. 2; ACI51195." evidence="2" ref="2">
    <original>A</original>
    <variation>V</variation>
    <location>
        <position position="72"/>
    </location>
</feature>
<feature type="sequence conflict" description="In Ref. 2; ACI51195." evidence="2" ref="2">
    <original>H</original>
    <variation>Q</variation>
    <location>
        <position position="85"/>
    </location>
</feature>
<evidence type="ECO:0000255" key="1">
    <source>
        <dbReference type="HAMAP-Rule" id="MF_01677"/>
    </source>
</evidence>
<evidence type="ECO:0000305" key="2"/>
<dbReference type="EC" id="4.2.1.109" evidence="1"/>
<dbReference type="EMBL" id="AM889285">
    <property type="protein sequence ID" value="CAP54528.1"/>
    <property type="status" value="ALT_INIT"/>
    <property type="molecule type" value="Genomic_DNA"/>
</dbReference>
<dbReference type="EMBL" id="CP001189">
    <property type="protein sequence ID" value="ACI51195.1"/>
    <property type="status" value="ALT_INIT"/>
    <property type="molecule type" value="Genomic_DNA"/>
</dbReference>
<dbReference type="RefSeq" id="WP_012553767.1">
    <property type="nucleotide sequence ID" value="NC_011365.1"/>
</dbReference>
<dbReference type="SMR" id="A9H8G1"/>
<dbReference type="STRING" id="272568.GDI0585"/>
<dbReference type="KEGG" id="gdi:GDI0585"/>
<dbReference type="KEGG" id="gdj:Gdia_1415"/>
<dbReference type="eggNOG" id="COG0235">
    <property type="taxonomic scope" value="Bacteria"/>
</dbReference>
<dbReference type="HOGENOM" id="CLU_006033_4_1_5"/>
<dbReference type="UniPathway" id="UPA00904">
    <property type="reaction ID" value="UER00875"/>
</dbReference>
<dbReference type="Proteomes" id="UP000001176">
    <property type="component" value="Chromosome"/>
</dbReference>
<dbReference type="GO" id="GO:0005829">
    <property type="term" value="C:cytosol"/>
    <property type="evidence" value="ECO:0007669"/>
    <property type="project" value="TreeGrafter"/>
</dbReference>
<dbReference type="GO" id="GO:0016832">
    <property type="term" value="F:aldehyde-lyase activity"/>
    <property type="evidence" value="ECO:0007669"/>
    <property type="project" value="TreeGrafter"/>
</dbReference>
<dbReference type="GO" id="GO:0046570">
    <property type="term" value="F:methylthioribulose 1-phosphate dehydratase activity"/>
    <property type="evidence" value="ECO:0007669"/>
    <property type="project" value="UniProtKB-UniRule"/>
</dbReference>
<dbReference type="GO" id="GO:0008270">
    <property type="term" value="F:zinc ion binding"/>
    <property type="evidence" value="ECO:0007669"/>
    <property type="project" value="UniProtKB-UniRule"/>
</dbReference>
<dbReference type="GO" id="GO:0019509">
    <property type="term" value="P:L-methionine salvage from methylthioadenosine"/>
    <property type="evidence" value="ECO:0007669"/>
    <property type="project" value="UniProtKB-UniRule"/>
</dbReference>
<dbReference type="GO" id="GO:0019323">
    <property type="term" value="P:pentose catabolic process"/>
    <property type="evidence" value="ECO:0007669"/>
    <property type="project" value="TreeGrafter"/>
</dbReference>
<dbReference type="Gene3D" id="3.40.225.10">
    <property type="entry name" value="Class II aldolase/adducin N-terminal domain"/>
    <property type="match status" value="1"/>
</dbReference>
<dbReference type="HAMAP" id="MF_01677">
    <property type="entry name" value="Salvage_MtnB"/>
    <property type="match status" value="1"/>
</dbReference>
<dbReference type="InterPro" id="IPR050197">
    <property type="entry name" value="Aldolase_class_II_sugar_metab"/>
</dbReference>
<dbReference type="InterPro" id="IPR001303">
    <property type="entry name" value="Aldolase_II/adducin_N"/>
</dbReference>
<dbReference type="InterPro" id="IPR036409">
    <property type="entry name" value="Aldolase_II/adducin_N_sf"/>
</dbReference>
<dbReference type="InterPro" id="IPR017714">
    <property type="entry name" value="MethylthioRu-1-P_deHdtase_MtnB"/>
</dbReference>
<dbReference type="NCBIfam" id="NF006672">
    <property type="entry name" value="PRK09220.1"/>
    <property type="match status" value="1"/>
</dbReference>
<dbReference type="NCBIfam" id="TIGR03328">
    <property type="entry name" value="salvage_mtnB"/>
    <property type="match status" value="1"/>
</dbReference>
<dbReference type="PANTHER" id="PTHR22789:SF0">
    <property type="entry name" value="3-OXO-TETRONATE 4-PHOSPHATE DECARBOXYLASE-RELATED"/>
    <property type="match status" value="1"/>
</dbReference>
<dbReference type="PANTHER" id="PTHR22789">
    <property type="entry name" value="FUCULOSE PHOSPHATE ALDOLASE"/>
    <property type="match status" value="1"/>
</dbReference>
<dbReference type="Pfam" id="PF00596">
    <property type="entry name" value="Aldolase_II"/>
    <property type="match status" value="1"/>
</dbReference>
<dbReference type="SMART" id="SM01007">
    <property type="entry name" value="Aldolase_II"/>
    <property type="match status" value="1"/>
</dbReference>
<dbReference type="SUPFAM" id="SSF53639">
    <property type="entry name" value="AraD/HMP-PK domain-like"/>
    <property type="match status" value="1"/>
</dbReference>
<accession>A9H8G1</accession>
<accession>B5ZI57</accession>
<gene>
    <name evidence="1" type="primary">mtnB</name>
    <name type="ordered locus">GDI0585</name>
    <name type="ordered locus">Gdia_1415</name>
</gene>
<reference key="1">
    <citation type="journal article" date="2009" name="BMC Genomics">
        <title>Complete genome sequence of the sugarcane nitrogen-fixing endophyte Gluconacetobacter diazotrophicus Pal5.</title>
        <authorList>
            <person name="Bertalan M."/>
            <person name="Albano R."/>
            <person name="de Padua V."/>
            <person name="Rouws L."/>
            <person name="Rojas C."/>
            <person name="Hemerly A."/>
            <person name="Teixeira K."/>
            <person name="Schwab S."/>
            <person name="Araujo J."/>
            <person name="Oliveira A."/>
            <person name="Franca L."/>
            <person name="Magalhaes V."/>
            <person name="Alqueres S."/>
            <person name="Cardoso A."/>
            <person name="Almeida W."/>
            <person name="Loureiro M.M."/>
            <person name="Nogueira E."/>
            <person name="Cidade D."/>
            <person name="Oliveira D."/>
            <person name="Simao T."/>
            <person name="Macedo J."/>
            <person name="Valadao A."/>
            <person name="Dreschsel M."/>
            <person name="Freitas F."/>
            <person name="Vidal M."/>
            <person name="Guedes H."/>
            <person name="Rodrigues E."/>
            <person name="Meneses C."/>
            <person name="Brioso P."/>
            <person name="Pozzer L."/>
            <person name="Figueiredo D."/>
            <person name="Montano H."/>
            <person name="Junior J."/>
            <person name="de Souza Filho G."/>
            <person name="Martin Quintana Flores V."/>
            <person name="Ferreira B."/>
            <person name="Branco A."/>
            <person name="Gonzalez P."/>
            <person name="Guillobel H."/>
            <person name="Lemos M."/>
            <person name="Seibel L."/>
            <person name="Macedo J."/>
            <person name="Alves-Ferreira M."/>
            <person name="Sachetto-Martins G."/>
            <person name="Coelho A."/>
            <person name="Santos E."/>
            <person name="Amaral G."/>
            <person name="Neves A."/>
            <person name="Pacheco A.B."/>
            <person name="Carvalho D."/>
            <person name="Lery L."/>
            <person name="Bisch P."/>
            <person name="Rossle S.C."/>
            <person name="Urmenyi T."/>
            <person name="Rael Pereira A."/>
            <person name="Silva R."/>
            <person name="Rondinelli E."/>
            <person name="von Kruger W."/>
            <person name="Martins O."/>
            <person name="Baldani J.I."/>
            <person name="Ferreira P.C."/>
        </authorList>
    </citation>
    <scope>NUCLEOTIDE SEQUENCE [LARGE SCALE GENOMIC DNA]</scope>
    <source>
        <strain>ATCC 49037 / DSM 5601 / CCUG 37298 / CIP 103539 / LMG 7603 / PAl5</strain>
    </source>
</reference>
<reference key="2">
    <citation type="journal article" date="2010" name="Stand. Genomic Sci.">
        <title>Two genome sequences of the same bacterial strain, Gluconacetobacter diazotrophicus PAl 5, suggest a new standard in genome sequence submission.</title>
        <authorList>
            <person name="Giongo A."/>
            <person name="Tyler H.L."/>
            <person name="Zipperer U.N."/>
            <person name="Triplett E.W."/>
        </authorList>
    </citation>
    <scope>NUCLEOTIDE SEQUENCE [LARGE SCALE GENOMIC DNA]</scope>
    <source>
        <strain>ATCC 49037 / DSM 5601 / CCUG 37298 / CIP 103539 / LMG 7603 / PAl5</strain>
    </source>
</reference>
<organism>
    <name type="scientific">Gluconacetobacter diazotrophicus (strain ATCC 49037 / DSM 5601 / CCUG 37298 / CIP 103539 / LMG 7603 / PAl5)</name>
    <dbReference type="NCBI Taxonomy" id="272568"/>
    <lineage>
        <taxon>Bacteria</taxon>
        <taxon>Pseudomonadati</taxon>
        <taxon>Pseudomonadota</taxon>
        <taxon>Alphaproteobacteria</taxon>
        <taxon>Acetobacterales</taxon>
        <taxon>Acetobacteraceae</taxon>
        <taxon>Gluconacetobacter</taxon>
    </lineage>
</organism>
<keyword id="KW-0028">Amino-acid biosynthesis</keyword>
<keyword id="KW-0456">Lyase</keyword>
<keyword id="KW-0479">Metal-binding</keyword>
<keyword id="KW-0486">Methionine biosynthesis</keyword>
<keyword id="KW-1185">Reference proteome</keyword>
<keyword id="KW-0862">Zinc</keyword>
<proteinExistence type="inferred from homology"/>